<reference key="1">
    <citation type="journal article" date="2005" name="Infect. Immun.">
        <title>Whole-genome analyses of speciation events in pathogenic Brucellae.</title>
        <authorList>
            <person name="Chain P.S."/>
            <person name="Comerci D.J."/>
            <person name="Tolmasky M.E."/>
            <person name="Larimer F.W."/>
            <person name="Malfatti S.A."/>
            <person name="Vergez L.M."/>
            <person name="Aguero F."/>
            <person name="Land M.L."/>
            <person name="Ugalde R.A."/>
            <person name="Garcia E."/>
        </authorList>
    </citation>
    <scope>NUCLEOTIDE SEQUENCE [LARGE SCALE GENOMIC DNA]</scope>
    <source>
        <strain>2308</strain>
    </source>
</reference>
<organism>
    <name type="scientific">Brucella abortus (strain 2308)</name>
    <dbReference type="NCBI Taxonomy" id="359391"/>
    <lineage>
        <taxon>Bacteria</taxon>
        <taxon>Pseudomonadati</taxon>
        <taxon>Pseudomonadota</taxon>
        <taxon>Alphaproteobacteria</taxon>
        <taxon>Hyphomicrobiales</taxon>
        <taxon>Brucellaceae</taxon>
        <taxon>Brucella/Ochrobactrum group</taxon>
        <taxon>Brucella</taxon>
    </lineage>
</organism>
<keyword id="KW-1185">Reference proteome</keyword>
<keyword id="KW-0843">Virulence</keyword>
<proteinExistence type="inferred from homology"/>
<sequence length="633" mass="70728">MLDFLELEETVGRAWHRLIGKTGSWPQYPDHAVQLVDIRQRLAICFRGFGGDIAVQIAPARARTSTHRLGLRQRMALGEEKLAQPLRDEATLMLPPEIALFPDRQLNYDLYVWLVGYMAVMPMDADALPEDALRRDLAALQIAEQTVERACRAFPGLKPRYKRLCAAILAERPKRPLHRLEQQVEARILSLLKQGADLPDDALPTIFPHRGPAGYLPALPVPLWPGLMKREEVAPRTGEDEPVRNSQSEGAETGRQIAQRERQDPRHADRSPFILNRFEKILAMAEMVSVDRPSDDSDEQNAKSADELDDLTLGERKGRPAARFRFDLDLPPEAVDRSLLTAELTYPEWDYRKGAYLPDHCAVLAAPVQEKEKPLELDAAAQSLVRRVRRQFEILRPGREVLRAQLDGTDLDLDAVVRSRCDLAAGGQGSDRVHLMSRPQANDLAVTLLVDVSLSTDAWVDNRRVLDVEKEALLVLANGIAACGDRCSILTFTSRRRSWVRVETVKDFDESFGPTVEHRIAALKPGFYTRMGAAMRHATAKLAEQPNRKKLLLLLTDGKPNDVDHYEGRFALEDSRRAAGEVRAKGVNVFAVTVDREASAYLPALFGRGGYALVANLAKLPVAMPAIYRMLAG</sequence>
<gene>
    <name type="primary">norD</name>
    <name type="ordered locus">BAB2_0952</name>
</gene>
<comment type="function">
    <text evidence="1">Part of the operon norEFCBQD encoding nitric oxide reductase. Essential virulence factor, probably involved in the detoxification of nitric oxide (NO) produced in the macrophages during the innate response against infection (By similarity).</text>
</comment>
<feature type="chain" id="PRO_0000248305" description="Protein NorD">
    <location>
        <begin position="1"/>
        <end position="633"/>
    </location>
</feature>
<feature type="domain" description="VWFA" evidence="2">
    <location>
        <begin position="445"/>
        <end position="633"/>
    </location>
</feature>
<feature type="region of interest" description="Disordered" evidence="3">
    <location>
        <begin position="232"/>
        <end position="270"/>
    </location>
</feature>
<feature type="region of interest" description="Disordered" evidence="3">
    <location>
        <begin position="290"/>
        <end position="314"/>
    </location>
</feature>
<feature type="compositionally biased region" description="Basic and acidic residues" evidence="3">
    <location>
        <begin position="232"/>
        <end position="243"/>
    </location>
</feature>
<feature type="compositionally biased region" description="Basic and acidic residues" evidence="3">
    <location>
        <begin position="258"/>
        <end position="270"/>
    </location>
</feature>
<feature type="compositionally biased region" description="Basic and acidic residues" evidence="3">
    <location>
        <begin position="292"/>
        <end position="306"/>
    </location>
</feature>
<dbReference type="EMBL" id="AM040265">
    <property type="protein sequence ID" value="CAJ13118.1"/>
    <property type="molecule type" value="Genomic_DNA"/>
</dbReference>
<dbReference type="RefSeq" id="WP_002966335.1">
    <property type="nucleotide sequence ID" value="NZ_KN046823.1"/>
</dbReference>
<dbReference type="STRING" id="359391.BAB2_0952"/>
<dbReference type="KEGG" id="bmf:BAB2_0952"/>
<dbReference type="PATRIC" id="fig|359391.11.peg.637"/>
<dbReference type="HOGENOM" id="CLU_024042_0_0_5"/>
<dbReference type="PhylomeDB" id="Q2YJT9"/>
<dbReference type="Proteomes" id="UP000002719">
    <property type="component" value="Chromosome II"/>
</dbReference>
<dbReference type="CDD" id="cd01454">
    <property type="entry name" value="vWA_norD_type"/>
    <property type="match status" value="1"/>
</dbReference>
<dbReference type="Gene3D" id="3.40.50.410">
    <property type="entry name" value="von Willebrand factor, type A domain"/>
    <property type="match status" value="1"/>
</dbReference>
<dbReference type="InterPro" id="IPR051928">
    <property type="entry name" value="NorD/CobT"/>
</dbReference>
<dbReference type="InterPro" id="IPR002035">
    <property type="entry name" value="VWF_A"/>
</dbReference>
<dbReference type="InterPro" id="IPR036465">
    <property type="entry name" value="vWFA_dom_sf"/>
</dbReference>
<dbReference type="PANTHER" id="PTHR41248">
    <property type="entry name" value="NORD PROTEIN"/>
    <property type="match status" value="1"/>
</dbReference>
<dbReference type="PANTHER" id="PTHR41248:SF1">
    <property type="entry name" value="NORD PROTEIN"/>
    <property type="match status" value="1"/>
</dbReference>
<dbReference type="Pfam" id="PF00092">
    <property type="entry name" value="VWA"/>
    <property type="match status" value="1"/>
</dbReference>
<dbReference type="SMART" id="SM00327">
    <property type="entry name" value="VWA"/>
    <property type="match status" value="1"/>
</dbReference>
<dbReference type="SUPFAM" id="SSF53300">
    <property type="entry name" value="vWA-like"/>
    <property type="match status" value="1"/>
</dbReference>
<dbReference type="PROSITE" id="PS50234">
    <property type="entry name" value="VWFA"/>
    <property type="match status" value="1"/>
</dbReference>
<protein>
    <recommendedName>
        <fullName>Protein NorD</fullName>
    </recommendedName>
</protein>
<accession>Q2YJT9</accession>
<evidence type="ECO:0000250" key="1"/>
<evidence type="ECO:0000255" key="2">
    <source>
        <dbReference type="PROSITE-ProRule" id="PRU00219"/>
    </source>
</evidence>
<evidence type="ECO:0000256" key="3">
    <source>
        <dbReference type="SAM" id="MobiDB-lite"/>
    </source>
</evidence>
<name>NORD_BRUA2</name>